<organism>
    <name type="scientific">Arabidopsis thaliana</name>
    <name type="common">Mouse-ear cress</name>
    <dbReference type="NCBI Taxonomy" id="3702"/>
    <lineage>
        <taxon>Eukaryota</taxon>
        <taxon>Viridiplantae</taxon>
        <taxon>Streptophyta</taxon>
        <taxon>Embryophyta</taxon>
        <taxon>Tracheophyta</taxon>
        <taxon>Spermatophyta</taxon>
        <taxon>Magnoliopsida</taxon>
        <taxon>eudicotyledons</taxon>
        <taxon>Gunneridae</taxon>
        <taxon>Pentapetalae</taxon>
        <taxon>rosids</taxon>
        <taxon>malvids</taxon>
        <taxon>Brassicales</taxon>
        <taxon>Brassicaceae</taxon>
        <taxon>Camelineae</taxon>
        <taxon>Arabidopsis</taxon>
    </lineage>
</organism>
<feature type="chain" id="PRO_0000449257" description="Cytochrome b-c1 complex subunit 6-2, mitochondrial">
    <location>
        <begin position="1"/>
        <end position="62"/>
    </location>
</feature>
<feature type="disulfide bond" evidence="2">
    <location>
        <begin position="17"/>
        <end position="59"/>
    </location>
</feature>
<feature type="disulfide bond" evidence="2">
    <location>
        <begin position="31"/>
        <end position="45"/>
    </location>
</feature>
<comment type="function">
    <text evidence="1">Component of the ubiquinol-cytochrome c oxidoreductase, a multisubunit transmembrane complex that is part of the mitochondrial electron transport chain which drives oxidative phosphorylation. The respiratory chain contains 3 multisubunit complexes succinate dehydrogenase (complex II, CII), ubiquinol-cytochrome c oxidoreductase (cytochrome b-c1 complex, complex III, CIII) and cytochrome c oxidase (complex IV, CIV), that cooperate to transfer electrons derived from NADH and succinate to molecular oxygen, creating an electrochemical gradient over the inner membrane that drives transmembrane transport and the ATP synthase. The cytochrome b-c1 complex catalyzes electron transfer from ubiquinol to cytochrome c, linking this redox reaction to translocation of protons across the mitochondrial inner membrane, with protons being carried across the membrane as hydrogens on the quinol. In the process called Q cycle, 2 protons are consumed from the matrix, 4 protons are released into the intermembrane space and 2 electrons are passed to cytochrome c.</text>
</comment>
<comment type="subunit">
    <text evidence="3 4">Component of the ubiquinol-cytochrome c oxidoreductase (cytochrome b-c1 complex, complex III, CIII), a multisubunit enzyme composed of 10 subunits. The complex is composed of 3 respiratory subunits cytochrome b (MT-CYB), cytochrome c1 (CYC1-1 or CYC1-2) and Rieske protein (UCR1-1 or UCR1-2), 2 core protein subunits MPPalpha1 (or MPPalpha2) and MPPB, and 5 low-molecular weight protein subunits QCR7-1 (or QCR7-2), UCRQ-1 (or UCRQ-2), QCR9, UCRY and probably QCR6-1 (or QCR6-2) (Probable). The complex exists as an obligatory dimer and forms supercomplexes (SCs) in the inner mitochondrial membrane with NADH-ubiquinone oxidoreductase (complex I, CI), resulting in different assemblies (supercomplexes SCI(1)III(2) and SCI(2)III(4)) (PubMed:12970493).</text>
</comment>
<comment type="subcellular location">
    <subcellularLocation>
        <location evidence="1">Mitochondrion inner membrane</location>
        <topology evidence="1">Peripheral membrane protein</topology>
        <orientation evidence="1">Intermembrane side</orientation>
    </subcellularLocation>
</comment>
<comment type="similarity">
    <text evidence="4">Belongs to the UQCRH/QCR6 family.</text>
</comment>
<reference key="1">
    <citation type="journal article" date="1999" name="Nature">
        <title>Sequence and analysis of chromosome 2 of the plant Arabidopsis thaliana.</title>
        <authorList>
            <person name="Lin X."/>
            <person name="Kaul S."/>
            <person name="Rounsley S.D."/>
            <person name="Shea T.P."/>
            <person name="Benito M.-I."/>
            <person name="Town C.D."/>
            <person name="Fujii C.Y."/>
            <person name="Mason T.M."/>
            <person name="Bowman C.L."/>
            <person name="Barnstead M.E."/>
            <person name="Feldblyum T.V."/>
            <person name="Buell C.R."/>
            <person name="Ketchum K.A."/>
            <person name="Lee J.J."/>
            <person name="Ronning C.M."/>
            <person name="Koo H.L."/>
            <person name="Moffat K.S."/>
            <person name="Cronin L.A."/>
            <person name="Shen M."/>
            <person name="Pai G."/>
            <person name="Van Aken S."/>
            <person name="Umayam L."/>
            <person name="Tallon L.J."/>
            <person name="Gill J.E."/>
            <person name="Adams M.D."/>
            <person name="Carrera A.J."/>
            <person name="Creasy T.H."/>
            <person name="Goodman H.M."/>
            <person name="Somerville C.R."/>
            <person name="Copenhaver G.P."/>
            <person name="Preuss D."/>
            <person name="Nierman W.C."/>
            <person name="White O."/>
            <person name="Eisen J.A."/>
            <person name="Salzberg S.L."/>
            <person name="Fraser C.M."/>
            <person name="Venter J.C."/>
        </authorList>
    </citation>
    <scope>NUCLEOTIDE SEQUENCE [LARGE SCALE GENOMIC DNA]</scope>
    <source>
        <strain>cv. Columbia</strain>
    </source>
</reference>
<reference key="2">
    <citation type="journal article" date="2017" name="Plant J.">
        <title>Araport11: a complete reannotation of the Arabidopsis thaliana reference genome.</title>
        <authorList>
            <person name="Cheng C.Y."/>
            <person name="Krishnakumar V."/>
            <person name="Chan A.P."/>
            <person name="Thibaud-Nissen F."/>
            <person name="Schobel S."/>
            <person name="Town C.D."/>
        </authorList>
    </citation>
    <scope>GENOME REANNOTATION</scope>
    <source>
        <strain>cv. Columbia</strain>
    </source>
</reference>
<reference key="3">
    <citation type="journal article" date="2003" name="Science">
        <title>Empirical analysis of transcriptional activity in the Arabidopsis genome.</title>
        <authorList>
            <person name="Yamada K."/>
            <person name="Lim J."/>
            <person name="Dale J.M."/>
            <person name="Chen H."/>
            <person name="Shinn P."/>
            <person name="Palm C.J."/>
            <person name="Southwick A.M."/>
            <person name="Wu H.C."/>
            <person name="Kim C.J."/>
            <person name="Nguyen M."/>
            <person name="Pham P.K."/>
            <person name="Cheuk R.F."/>
            <person name="Karlin-Newmann G."/>
            <person name="Liu S.X."/>
            <person name="Lam B."/>
            <person name="Sakano H."/>
            <person name="Wu T."/>
            <person name="Yu G."/>
            <person name="Miranda M."/>
            <person name="Quach H.L."/>
            <person name="Tripp M."/>
            <person name="Chang C.H."/>
            <person name="Lee J.M."/>
            <person name="Toriumi M.J."/>
            <person name="Chan M.M."/>
            <person name="Tang C.C."/>
            <person name="Onodera C.S."/>
            <person name="Deng J.M."/>
            <person name="Akiyama K."/>
            <person name="Ansari Y."/>
            <person name="Arakawa T."/>
            <person name="Banh J."/>
            <person name="Banno F."/>
            <person name="Bowser L."/>
            <person name="Brooks S.Y."/>
            <person name="Carninci P."/>
            <person name="Chao Q."/>
            <person name="Choy N."/>
            <person name="Enju A."/>
            <person name="Goldsmith A.D."/>
            <person name="Gurjal M."/>
            <person name="Hansen N.F."/>
            <person name="Hayashizaki Y."/>
            <person name="Johnson-Hopson C."/>
            <person name="Hsuan V.W."/>
            <person name="Iida K."/>
            <person name="Karnes M."/>
            <person name="Khan S."/>
            <person name="Koesema E."/>
            <person name="Ishida J."/>
            <person name="Jiang P.X."/>
            <person name="Jones T."/>
            <person name="Kawai J."/>
            <person name="Kamiya A."/>
            <person name="Meyers C."/>
            <person name="Nakajima M."/>
            <person name="Narusaka M."/>
            <person name="Seki M."/>
            <person name="Sakurai T."/>
            <person name="Satou M."/>
            <person name="Tamse R."/>
            <person name="Vaysberg M."/>
            <person name="Wallender E.K."/>
            <person name="Wong C."/>
            <person name="Yamamura Y."/>
            <person name="Yuan S."/>
            <person name="Shinozaki K."/>
            <person name="Davis R.W."/>
            <person name="Theologis A."/>
            <person name="Ecker J.R."/>
        </authorList>
    </citation>
    <scope>NUCLEOTIDE SEQUENCE [LARGE SCALE MRNA]</scope>
    <source>
        <strain>cv. Columbia</strain>
    </source>
</reference>
<reference key="4">
    <citation type="journal article" date="2003" name="Plant Physiol.">
        <title>New insights into the respiratory chain of plant mitochondria. Supercomplexes and a unique composition of complex II.</title>
        <authorList>
            <person name="Eubel H."/>
            <person name="Jansch L."/>
            <person name="Braun H.P."/>
        </authorList>
    </citation>
    <scope>SUBUNIT</scope>
</reference>
<accession>Q9SJV7</accession>
<protein>
    <recommendedName>
        <fullName>Cytochrome b-c1 complex subunit 6-2, mitochondrial</fullName>
    </recommendedName>
    <alternativeName>
        <fullName>Complex III subunit 6-2</fullName>
    </alternativeName>
    <alternativeName>
        <fullName>Complex III subunit VI</fullName>
    </alternativeName>
    <alternativeName>
        <fullName>Mitochondrial hinge protein</fullName>
    </alternativeName>
    <alternativeName>
        <fullName>Ubiquinol-cytochrome c oxidoreductase subunit 6-2</fullName>
    </alternativeName>
</protein>
<keyword id="KW-1015">Disulfide bond</keyword>
<keyword id="KW-0249">Electron transport</keyword>
<keyword id="KW-0472">Membrane</keyword>
<keyword id="KW-0496">Mitochondrion</keyword>
<keyword id="KW-0999">Mitochondrion inner membrane</keyword>
<keyword id="KW-1185">Reference proteome</keyword>
<keyword id="KW-0679">Respiratory chain</keyword>
<keyword id="KW-0813">Transport</keyword>
<sequence>MPEEDVVDQKRYFEESCKPKCVKPLLEYQACVKRIQDDESGHKHCTGQYFDYWHCVDKCVSV</sequence>
<name>QCR62_ARATH</name>
<evidence type="ECO:0000250" key="1">
    <source>
        <dbReference type="UniProtKB" id="P00127"/>
    </source>
</evidence>
<evidence type="ECO:0000255" key="2">
    <source>
        <dbReference type="PIRSR" id="PIRSR000019-1"/>
    </source>
</evidence>
<evidence type="ECO:0000269" key="3">
    <source>
    </source>
</evidence>
<evidence type="ECO:0000305" key="4"/>
<evidence type="ECO:0000312" key="5">
    <source>
        <dbReference type="Araport" id="AT2G01090"/>
    </source>
</evidence>
<evidence type="ECO:0000312" key="6">
    <source>
        <dbReference type="EMBL" id="AAF18657.1"/>
    </source>
</evidence>
<dbReference type="EMBL" id="AC006837">
    <property type="protein sequence ID" value="AAF18657.1"/>
    <property type="molecule type" value="Genomic_DNA"/>
</dbReference>
<dbReference type="EMBL" id="CP002685">
    <property type="protein sequence ID" value="AEC05397.1"/>
    <property type="molecule type" value="Genomic_DNA"/>
</dbReference>
<dbReference type="EMBL" id="CP002685">
    <property type="protein sequence ID" value="AEC05398.1"/>
    <property type="molecule type" value="Genomic_DNA"/>
</dbReference>
<dbReference type="EMBL" id="CP002685">
    <property type="protein sequence ID" value="ANM63169.1"/>
    <property type="molecule type" value="Genomic_DNA"/>
</dbReference>
<dbReference type="EMBL" id="CP002685">
    <property type="protein sequence ID" value="ANM63170.1"/>
    <property type="molecule type" value="Genomic_DNA"/>
</dbReference>
<dbReference type="EMBL" id="AF360220">
    <property type="protein sequence ID" value="AAK25930.1"/>
    <property type="molecule type" value="mRNA"/>
</dbReference>
<dbReference type="EMBL" id="AY040063">
    <property type="protein sequence ID" value="AAK64121.1"/>
    <property type="molecule type" value="mRNA"/>
</dbReference>
<dbReference type="PIR" id="E84420">
    <property type="entry name" value="E84420"/>
</dbReference>
<dbReference type="RefSeq" id="NP_001189492.1">
    <property type="nucleotide sequence ID" value="NM_001202563.1"/>
</dbReference>
<dbReference type="RefSeq" id="NP_001318168.1">
    <property type="nucleotide sequence ID" value="NM_001335032.1"/>
</dbReference>
<dbReference type="RefSeq" id="NP_001325276.1">
    <property type="nucleotide sequence ID" value="NM_001335033.1"/>
</dbReference>
<dbReference type="RefSeq" id="NP_178219.1">
    <property type="nucleotide sequence ID" value="NM_126171.4"/>
</dbReference>
<dbReference type="SMR" id="Q9SJV7"/>
<dbReference type="FunCoup" id="Q9SJV7">
    <property type="interactions" value="792"/>
</dbReference>
<dbReference type="STRING" id="3702.Q9SJV7"/>
<dbReference type="PaxDb" id="3702-AT2G01090.1"/>
<dbReference type="ProteomicsDB" id="189727"/>
<dbReference type="EnsemblPlants" id="AT2G01090.1">
    <property type="protein sequence ID" value="AT2G01090.1"/>
    <property type="gene ID" value="AT2G01090"/>
</dbReference>
<dbReference type="EnsemblPlants" id="AT2G01090.2">
    <property type="protein sequence ID" value="AT2G01090.2"/>
    <property type="gene ID" value="AT2G01090"/>
</dbReference>
<dbReference type="EnsemblPlants" id="AT2G01090.3">
    <property type="protein sequence ID" value="AT2G01090.3"/>
    <property type="gene ID" value="AT2G01090"/>
</dbReference>
<dbReference type="EnsemblPlants" id="AT2G01090.4">
    <property type="protein sequence ID" value="AT2G01090.4"/>
    <property type="gene ID" value="AT2G01090"/>
</dbReference>
<dbReference type="GeneID" id="814638"/>
<dbReference type="Gramene" id="AT2G01090.1">
    <property type="protein sequence ID" value="AT2G01090.1"/>
    <property type="gene ID" value="AT2G01090"/>
</dbReference>
<dbReference type="Gramene" id="AT2G01090.2">
    <property type="protein sequence ID" value="AT2G01090.2"/>
    <property type="gene ID" value="AT2G01090"/>
</dbReference>
<dbReference type="Gramene" id="AT2G01090.3">
    <property type="protein sequence ID" value="AT2G01090.3"/>
    <property type="gene ID" value="AT2G01090"/>
</dbReference>
<dbReference type="Gramene" id="AT2G01090.4">
    <property type="protein sequence ID" value="AT2G01090.4"/>
    <property type="gene ID" value="AT2G01090"/>
</dbReference>
<dbReference type="KEGG" id="ath:AT2G01090"/>
<dbReference type="Araport" id="AT2G01090"/>
<dbReference type="TAIR" id="AT2G01090"/>
<dbReference type="eggNOG" id="KOG4763">
    <property type="taxonomic scope" value="Eukaryota"/>
</dbReference>
<dbReference type="HOGENOM" id="CLU_115913_2_1_1"/>
<dbReference type="InParanoid" id="Q9SJV7"/>
<dbReference type="OMA" id="TIWCDSD"/>
<dbReference type="OrthoDB" id="405848at2759"/>
<dbReference type="PhylomeDB" id="Q9SJV7"/>
<dbReference type="PRO" id="PR:Q9SJV7"/>
<dbReference type="Proteomes" id="UP000006548">
    <property type="component" value="Chromosome 2"/>
</dbReference>
<dbReference type="ExpressionAtlas" id="Q9SJV7">
    <property type="expression patterns" value="baseline and differential"/>
</dbReference>
<dbReference type="GO" id="GO:0005743">
    <property type="term" value="C:mitochondrial inner membrane"/>
    <property type="evidence" value="ECO:0007669"/>
    <property type="project" value="UniProtKB-SubCell"/>
</dbReference>
<dbReference type="GO" id="GO:0005739">
    <property type="term" value="C:mitochondrion"/>
    <property type="evidence" value="ECO:0007005"/>
    <property type="project" value="TAIR"/>
</dbReference>
<dbReference type="GO" id="GO:0006122">
    <property type="term" value="P:mitochondrial electron transport, ubiquinol to cytochrome c"/>
    <property type="evidence" value="ECO:0007669"/>
    <property type="project" value="InterPro"/>
</dbReference>
<dbReference type="FunFam" id="1.10.287.20:FF:000001">
    <property type="entry name" value="Cytochrome b-c1 complex subunit 6"/>
    <property type="match status" value="1"/>
</dbReference>
<dbReference type="Gene3D" id="1.10.287.20">
    <property type="entry name" value="Ubiquinol-cytochrome C reductase hinge domain"/>
    <property type="match status" value="1"/>
</dbReference>
<dbReference type="InterPro" id="IPR003422">
    <property type="entry name" value="Cyt_b-c1_6"/>
</dbReference>
<dbReference type="InterPro" id="IPR023184">
    <property type="entry name" value="Ubol_cytC_Rdtase_hinge_dom"/>
</dbReference>
<dbReference type="InterPro" id="IPR036811">
    <property type="entry name" value="Ubol_cytC_Rdtase_hinge_dom_sf"/>
</dbReference>
<dbReference type="PANTHER" id="PTHR15336:SF0">
    <property type="entry name" value="CYTOCHROME B-C1 COMPLEX SUBUNIT 6, MITOCHONDRIAL"/>
    <property type="match status" value="1"/>
</dbReference>
<dbReference type="PANTHER" id="PTHR15336">
    <property type="entry name" value="UBIQUINOL-CYTOCHROME C REDUCTASE COMPLEX 7.8 KDA PROTEIN"/>
    <property type="match status" value="1"/>
</dbReference>
<dbReference type="Pfam" id="PF02320">
    <property type="entry name" value="UCR_hinge"/>
    <property type="match status" value="1"/>
</dbReference>
<dbReference type="PIRSF" id="PIRSF000019">
    <property type="entry name" value="Bc1_11K"/>
    <property type="match status" value="1"/>
</dbReference>
<dbReference type="SUPFAM" id="SSF81531">
    <property type="entry name" value="Non-heme 11 kDa protein of cytochrome bc1 complex (Ubiquinol-cytochrome c reductase)"/>
    <property type="match status" value="1"/>
</dbReference>
<proteinExistence type="evidence at protein level"/>
<gene>
    <name type="primary">QCR6-2</name>
    <name evidence="5" type="ordered locus">At2g01090</name>
    <name evidence="6" type="ORF">F23H14.6</name>
</gene>